<dbReference type="EC" id="2.1.1.163" evidence="1"/>
<dbReference type="EMBL" id="CP000804">
    <property type="protein sequence ID" value="ABU57392.1"/>
    <property type="molecule type" value="Genomic_DNA"/>
</dbReference>
<dbReference type="RefSeq" id="WP_012119822.1">
    <property type="nucleotide sequence ID" value="NC_009767.1"/>
</dbReference>
<dbReference type="SMR" id="A7NF26"/>
<dbReference type="STRING" id="383372.Rcas_1295"/>
<dbReference type="KEGG" id="rca:Rcas_1295"/>
<dbReference type="eggNOG" id="COG2226">
    <property type="taxonomic scope" value="Bacteria"/>
</dbReference>
<dbReference type="HOGENOM" id="CLU_037990_0_0_0"/>
<dbReference type="OrthoDB" id="9808140at2"/>
<dbReference type="UniPathway" id="UPA00079">
    <property type="reaction ID" value="UER00169"/>
</dbReference>
<dbReference type="Proteomes" id="UP000000263">
    <property type="component" value="Chromosome"/>
</dbReference>
<dbReference type="GO" id="GO:0043770">
    <property type="term" value="F:demethylmenaquinone methyltransferase activity"/>
    <property type="evidence" value="ECO:0007669"/>
    <property type="project" value="UniProtKB-UniRule"/>
</dbReference>
<dbReference type="GO" id="GO:0009234">
    <property type="term" value="P:menaquinone biosynthetic process"/>
    <property type="evidence" value="ECO:0007669"/>
    <property type="project" value="UniProtKB-UniRule"/>
</dbReference>
<dbReference type="GO" id="GO:0032259">
    <property type="term" value="P:methylation"/>
    <property type="evidence" value="ECO:0007669"/>
    <property type="project" value="UniProtKB-KW"/>
</dbReference>
<dbReference type="CDD" id="cd02440">
    <property type="entry name" value="AdoMet_MTases"/>
    <property type="match status" value="1"/>
</dbReference>
<dbReference type="Gene3D" id="3.40.50.150">
    <property type="entry name" value="Vaccinia Virus protein VP39"/>
    <property type="match status" value="1"/>
</dbReference>
<dbReference type="HAMAP" id="MF_01813">
    <property type="entry name" value="MenG_UbiE_methyltr"/>
    <property type="match status" value="1"/>
</dbReference>
<dbReference type="InterPro" id="IPR029063">
    <property type="entry name" value="SAM-dependent_MTases_sf"/>
</dbReference>
<dbReference type="InterPro" id="IPR004033">
    <property type="entry name" value="UbiE/COQ5_MeTrFase"/>
</dbReference>
<dbReference type="NCBIfam" id="TIGR01934">
    <property type="entry name" value="MenG_MenH_UbiE"/>
    <property type="match status" value="1"/>
</dbReference>
<dbReference type="PANTHER" id="PTHR43591:SF24">
    <property type="entry name" value="2-METHOXY-6-POLYPRENYL-1,4-BENZOQUINOL METHYLASE, MITOCHONDRIAL"/>
    <property type="match status" value="1"/>
</dbReference>
<dbReference type="PANTHER" id="PTHR43591">
    <property type="entry name" value="METHYLTRANSFERASE"/>
    <property type="match status" value="1"/>
</dbReference>
<dbReference type="Pfam" id="PF01209">
    <property type="entry name" value="Ubie_methyltran"/>
    <property type="match status" value="1"/>
</dbReference>
<dbReference type="SUPFAM" id="SSF53335">
    <property type="entry name" value="S-adenosyl-L-methionine-dependent methyltransferases"/>
    <property type="match status" value="1"/>
</dbReference>
<dbReference type="PROSITE" id="PS51608">
    <property type="entry name" value="SAM_MT_UBIE"/>
    <property type="match status" value="1"/>
</dbReference>
<evidence type="ECO:0000255" key="1">
    <source>
        <dbReference type="HAMAP-Rule" id="MF_01813"/>
    </source>
</evidence>
<reference key="1">
    <citation type="submission" date="2007-08" db="EMBL/GenBank/DDBJ databases">
        <title>Complete sequence of Roseiflexus castenholzii DSM 13941.</title>
        <authorList>
            <consortium name="US DOE Joint Genome Institute"/>
            <person name="Copeland A."/>
            <person name="Lucas S."/>
            <person name="Lapidus A."/>
            <person name="Barry K."/>
            <person name="Glavina del Rio T."/>
            <person name="Dalin E."/>
            <person name="Tice H."/>
            <person name="Pitluck S."/>
            <person name="Thompson L.S."/>
            <person name="Brettin T."/>
            <person name="Bruce D."/>
            <person name="Detter J.C."/>
            <person name="Han C."/>
            <person name="Tapia R."/>
            <person name="Schmutz J."/>
            <person name="Larimer F."/>
            <person name="Land M."/>
            <person name="Hauser L."/>
            <person name="Kyrpides N."/>
            <person name="Mikhailova N."/>
            <person name="Bryant D.A."/>
            <person name="Hanada S."/>
            <person name="Tsukatani Y."/>
            <person name="Richardson P."/>
        </authorList>
    </citation>
    <scope>NUCLEOTIDE SEQUENCE [LARGE SCALE GENOMIC DNA]</scope>
    <source>
        <strain>DSM 13941 / HLO8</strain>
    </source>
</reference>
<comment type="function">
    <text evidence="1">Methyltransferase required for the conversion of demethylmenaquinol (DMKH2) to menaquinol (MKH2).</text>
</comment>
<comment type="catalytic activity">
    <reaction evidence="1">
        <text>a 2-demethylmenaquinol + S-adenosyl-L-methionine = a menaquinol + S-adenosyl-L-homocysteine + H(+)</text>
        <dbReference type="Rhea" id="RHEA:42640"/>
        <dbReference type="Rhea" id="RHEA-COMP:9539"/>
        <dbReference type="Rhea" id="RHEA-COMP:9563"/>
        <dbReference type="ChEBI" id="CHEBI:15378"/>
        <dbReference type="ChEBI" id="CHEBI:18151"/>
        <dbReference type="ChEBI" id="CHEBI:55437"/>
        <dbReference type="ChEBI" id="CHEBI:57856"/>
        <dbReference type="ChEBI" id="CHEBI:59789"/>
        <dbReference type="EC" id="2.1.1.163"/>
    </reaction>
</comment>
<comment type="pathway">
    <text evidence="1">Quinol/quinone metabolism; menaquinone biosynthesis; menaquinol from 1,4-dihydroxy-2-naphthoate: step 2/2.</text>
</comment>
<comment type="similarity">
    <text evidence="1">Belongs to the class I-like SAM-binding methyltransferase superfamily. MenG/UbiE family.</text>
</comment>
<feature type="chain" id="PRO_1000187799" description="Demethylmenaquinone methyltransferase">
    <location>
        <begin position="1"/>
        <end position="238"/>
    </location>
</feature>
<feature type="binding site" evidence="1">
    <location>
        <position position="65"/>
    </location>
    <ligand>
        <name>S-adenosyl-L-methionine</name>
        <dbReference type="ChEBI" id="CHEBI:59789"/>
    </ligand>
</feature>
<feature type="binding site" evidence="1">
    <location>
        <position position="85"/>
    </location>
    <ligand>
        <name>S-adenosyl-L-methionine</name>
        <dbReference type="ChEBI" id="CHEBI:59789"/>
    </ligand>
</feature>
<feature type="binding site" evidence="1">
    <location>
        <begin position="109"/>
        <end position="110"/>
    </location>
    <ligand>
        <name>S-adenosyl-L-methionine</name>
        <dbReference type="ChEBI" id="CHEBI:59789"/>
    </ligand>
</feature>
<name>MENG_ROSCS</name>
<keyword id="KW-0474">Menaquinone biosynthesis</keyword>
<keyword id="KW-0489">Methyltransferase</keyword>
<keyword id="KW-1185">Reference proteome</keyword>
<keyword id="KW-0949">S-adenosyl-L-methionine</keyword>
<keyword id="KW-0808">Transferase</keyword>
<accession>A7NF26</accession>
<organism>
    <name type="scientific">Roseiflexus castenholzii (strain DSM 13941 / HLO8)</name>
    <dbReference type="NCBI Taxonomy" id="383372"/>
    <lineage>
        <taxon>Bacteria</taxon>
        <taxon>Bacillati</taxon>
        <taxon>Chloroflexota</taxon>
        <taxon>Chloroflexia</taxon>
        <taxon>Chloroflexales</taxon>
        <taxon>Roseiflexineae</taxon>
        <taxon>Roseiflexaceae</taxon>
        <taxon>Roseiflexus</taxon>
    </lineage>
</organism>
<protein>
    <recommendedName>
        <fullName evidence="1">Demethylmenaquinone methyltransferase</fullName>
        <ecNumber evidence="1">2.1.1.163</ecNumber>
    </recommendedName>
</protein>
<sequence length="238" mass="25873">MNTNVLPPPDQKAEYVERMFSRIASGYDTMNGIMTLGLDRGWRTATVALAAPPSCGRALDIGTGTGDFLVELAQWMPDGLAVGVDFTLPMMRAGLPKIAGQRAVFVAGDALALPFDDESFDAITTGFTLRNVTDIAAAFREMWRVARVGGTVACLEVARPRQPLLRFGHWVYFQRIVPLMARALGADPEAYTYLPQSARVFPPPDELAQIMREAGWSDVTYRLVGLGAAAIHTGIKRG</sequence>
<proteinExistence type="inferred from homology"/>
<gene>
    <name evidence="1" type="primary">menG</name>
    <name type="ordered locus">Rcas_1295</name>
</gene>